<keyword id="KW-1185">Reference proteome</keyword>
<sequence>MKRKTLLLIATLVALPGVTYADSPFSSLQSAHEKNTILKDLRKMCTPKGALTDEAWEKKIMASEGNQQHIREAMIAIERNNQHNYWQALGKVECPEM</sequence>
<accession>Q7CPG1</accession>
<reference key="1">
    <citation type="journal article" date="2001" name="Nature">
        <title>Complete genome sequence of Salmonella enterica serovar Typhimurium LT2.</title>
        <authorList>
            <person name="McClelland M."/>
            <person name="Sanderson K.E."/>
            <person name="Spieth J."/>
            <person name="Clifton S.W."/>
            <person name="Latreille P."/>
            <person name="Courtney L."/>
            <person name="Porwollik S."/>
            <person name="Ali J."/>
            <person name="Dante M."/>
            <person name="Du F."/>
            <person name="Hou S."/>
            <person name="Layman D."/>
            <person name="Leonard S."/>
            <person name="Nguyen C."/>
            <person name="Scott K."/>
            <person name="Holmes A."/>
            <person name="Grewal N."/>
            <person name="Mulvaney E."/>
            <person name="Ryan E."/>
            <person name="Sun H."/>
            <person name="Florea L."/>
            <person name="Miller W."/>
            <person name="Stoneking T."/>
            <person name="Nhan M."/>
            <person name="Waterston R."/>
            <person name="Wilson R.K."/>
        </authorList>
    </citation>
    <scope>NUCLEOTIDE SEQUENCE [LARGE SCALE GENOMIC DNA]</scope>
    <source>
        <strain>LT2 / SGSC1412 / ATCC 700720</strain>
    </source>
</reference>
<dbReference type="EMBL" id="AE006468">
    <property type="protein sequence ID" value="AAL22632.1"/>
    <property type="molecule type" value="Genomic_DNA"/>
</dbReference>
<dbReference type="RefSeq" id="NP_462673.1">
    <property type="nucleotide sequence ID" value="NC_003197.2"/>
</dbReference>
<dbReference type="RefSeq" id="WP_000824217.1">
    <property type="nucleotide sequence ID" value="NC_003197.2"/>
</dbReference>
<dbReference type="SMR" id="Q7CPG1"/>
<dbReference type="STRING" id="99287.STM3774"/>
<dbReference type="PaxDb" id="99287-STM3774"/>
<dbReference type="GeneID" id="1255298"/>
<dbReference type="KEGG" id="stm:STM3774"/>
<dbReference type="PATRIC" id="fig|99287.12.peg.3993"/>
<dbReference type="HOGENOM" id="CLU_159877_2_0_6"/>
<dbReference type="OMA" id="QNNYWEA"/>
<dbReference type="PhylomeDB" id="Q7CPG1"/>
<dbReference type="BioCyc" id="SENT99287:STM3774-MONOMER"/>
<dbReference type="Proteomes" id="UP000001014">
    <property type="component" value="Chromosome"/>
</dbReference>
<dbReference type="InterPro" id="IPR048144">
    <property type="entry name" value="YicS_fam"/>
</dbReference>
<dbReference type="NCBIfam" id="NF041639">
    <property type="entry name" value="YicS_fam"/>
    <property type="match status" value="1"/>
</dbReference>
<name>YICS_SALTY</name>
<feature type="chain" id="PRO_0000262301" description="Uncharacterized protein YicS">
    <location>
        <begin position="1"/>
        <end position="97"/>
    </location>
</feature>
<organism>
    <name type="scientific">Salmonella typhimurium (strain LT2 / SGSC1412 / ATCC 700720)</name>
    <dbReference type="NCBI Taxonomy" id="99287"/>
    <lineage>
        <taxon>Bacteria</taxon>
        <taxon>Pseudomonadati</taxon>
        <taxon>Pseudomonadota</taxon>
        <taxon>Gammaproteobacteria</taxon>
        <taxon>Enterobacterales</taxon>
        <taxon>Enterobacteriaceae</taxon>
        <taxon>Salmonella</taxon>
    </lineage>
</organism>
<proteinExistence type="predicted"/>
<gene>
    <name type="primary">yicS</name>
    <name type="ordered locus">STM3774</name>
</gene>
<protein>
    <recommendedName>
        <fullName>Uncharacterized protein YicS</fullName>
    </recommendedName>
</protein>